<comment type="function">
    <text evidence="1">Catalyzes the NADPH-dependent rearrangement and reduction of 1-deoxy-D-xylulose-5-phosphate (DXP) to 2-C-methyl-D-erythritol 4-phosphate (MEP).</text>
</comment>
<comment type="catalytic activity">
    <reaction evidence="1">
        <text>2-C-methyl-D-erythritol 4-phosphate + NADP(+) = 1-deoxy-D-xylulose 5-phosphate + NADPH + H(+)</text>
        <dbReference type="Rhea" id="RHEA:13717"/>
        <dbReference type="ChEBI" id="CHEBI:15378"/>
        <dbReference type="ChEBI" id="CHEBI:57783"/>
        <dbReference type="ChEBI" id="CHEBI:57792"/>
        <dbReference type="ChEBI" id="CHEBI:58262"/>
        <dbReference type="ChEBI" id="CHEBI:58349"/>
        <dbReference type="EC" id="1.1.1.267"/>
    </reaction>
    <physiologicalReaction direction="right-to-left" evidence="1">
        <dbReference type="Rhea" id="RHEA:13719"/>
    </physiologicalReaction>
</comment>
<comment type="cofactor">
    <cofactor evidence="1">
        <name>Mg(2+)</name>
        <dbReference type="ChEBI" id="CHEBI:18420"/>
    </cofactor>
    <cofactor evidence="1">
        <name>Mn(2+)</name>
        <dbReference type="ChEBI" id="CHEBI:29035"/>
    </cofactor>
</comment>
<comment type="pathway">
    <text evidence="1">Isoprenoid biosynthesis; isopentenyl diphosphate biosynthesis via DXP pathway; isopentenyl diphosphate from 1-deoxy-D-xylulose 5-phosphate: step 1/6.</text>
</comment>
<comment type="similarity">
    <text evidence="1">Belongs to the DXR family.</text>
</comment>
<evidence type="ECO:0000255" key="1">
    <source>
        <dbReference type="HAMAP-Rule" id="MF_00183"/>
    </source>
</evidence>
<protein>
    <recommendedName>
        <fullName evidence="1">1-deoxy-D-xylulose 5-phosphate reductoisomerase</fullName>
        <shortName evidence="1">DXP reductoisomerase</shortName>
        <ecNumber evidence="1">1.1.1.267</ecNumber>
    </recommendedName>
    <alternativeName>
        <fullName evidence="1">1-deoxyxylulose-5-phosphate reductoisomerase</fullName>
    </alternativeName>
    <alternativeName>
        <fullName evidence="1">2-C-methyl-D-erythritol 4-phosphate synthase</fullName>
    </alternativeName>
</protein>
<keyword id="KW-0414">Isoprene biosynthesis</keyword>
<keyword id="KW-0464">Manganese</keyword>
<keyword id="KW-0479">Metal-binding</keyword>
<keyword id="KW-0521">NADP</keyword>
<keyword id="KW-0560">Oxidoreductase</keyword>
<reference key="1">
    <citation type="journal article" date="2009" name="J. Bacteriol.">
        <title>Complete genome sequence of the extremophilic Bacillus cereus strain Q1 with industrial applications.</title>
        <authorList>
            <person name="Xiong Z."/>
            <person name="Jiang Y."/>
            <person name="Qi D."/>
            <person name="Lu H."/>
            <person name="Yang F."/>
            <person name="Yang J."/>
            <person name="Chen L."/>
            <person name="Sun L."/>
            <person name="Xu X."/>
            <person name="Xue Y."/>
            <person name="Zhu Y."/>
            <person name="Jin Q."/>
        </authorList>
    </citation>
    <scope>NUCLEOTIDE SEQUENCE [LARGE SCALE GENOMIC DNA]</scope>
    <source>
        <strain>Q1</strain>
    </source>
</reference>
<gene>
    <name evidence="1" type="primary">dxr</name>
    <name type="ordered locus">BCQ_3606</name>
</gene>
<accession>B9IVB0</accession>
<feature type="chain" id="PRO_1000189856" description="1-deoxy-D-xylulose 5-phosphate reductoisomerase">
    <location>
        <begin position="1"/>
        <end position="380"/>
    </location>
</feature>
<feature type="binding site" evidence="1">
    <location>
        <position position="10"/>
    </location>
    <ligand>
        <name>NADPH</name>
        <dbReference type="ChEBI" id="CHEBI:57783"/>
    </ligand>
</feature>
<feature type="binding site" evidence="1">
    <location>
        <position position="11"/>
    </location>
    <ligand>
        <name>NADPH</name>
        <dbReference type="ChEBI" id="CHEBI:57783"/>
    </ligand>
</feature>
<feature type="binding site" evidence="1">
    <location>
        <position position="12"/>
    </location>
    <ligand>
        <name>NADPH</name>
        <dbReference type="ChEBI" id="CHEBI:57783"/>
    </ligand>
</feature>
<feature type="binding site" evidence="1">
    <location>
        <position position="13"/>
    </location>
    <ligand>
        <name>NADPH</name>
        <dbReference type="ChEBI" id="CHEBI:57783"/>
    </ligand>
</feature>
<feature type="binding site" evidence="1">
    <location>
        <position position="36"/>
    </location>
    <ligand>
        <name>NADPH</name>
        <dbReference type="ChEBI" id="CHEBI:57783"/>
    </ligand>
</feature>
<feature type="binding site" evidence="1">
    <location>
        <position position="37"/>
    </location>
    <ligand>
        <name>NADPH</name>
        <dbReference type="ChEBI" id="CHEBI:57783"/>
    </ligand>
</feature>
<feature type="binding site" evidence="1">
    <location>
        <position position="38"/>
    </location>
    <ligand>
        <name>NADPH</name>
        <dbReference type="ChEBI" id="CHEBI:57783"/>
    </ligand>
</feature>
<feature type="binding site" evidence="1">
    <location>
        <position position="120"/>
    </location>
    <ligand>
        <name>NADPH</name>
        <dbReference type="ChEBI" id="CHEBI:57783"/>
    </ligand>
</feature>
<feature type="binding site" evidence="1">
    <location>
        <position position="121"/>
    </location>
    <ligand>
        <name>1-deoxy-D-xylulose 5-phosphate</name>
        <dbReference type="ChEBI" id="CHEBI:57792"/>
    </ligand>
</feature>
<feature type="binding site" evidence="1">
    <location>
        <position position="122"/>
    </location>
    <ligand>
        <name>NADPH</name>
        <dbReference type="ChEBI" id="CHEBI:57783"/>
    </ligand>
</feature>
<feature type="binding site" evidence="1">
    <location>
        <position position="146"/>
    </location>
    <ligand>
        <name>Mn(2+)</name>
        <dbReference type="ChEBI" id="CHEBI:29035"/>
    </ligand>
</feature>
<feature type="binding site" evidence="1">
    <location>
        <position position="147"/>
    </location>
    <ligand>
        <name>1-deoxy-D-xylulose 5-phosphate</name>
        <dbReference type="ChEBI" id="CHEBI:57792"/>
    </ligand>
</feature>
<feature type="binding site" evidence="1">
    <location>
        <position position="148"/>
    </location>
    <ligand>
        <name>1-deoxy-D-xylulose 5-phosphate</name>
        <dbReference type="ChEBI" id="CHEBI:57792"/>
    </ligand>
</feature>
<feature type="binding site" evidence="1">
    <location>
        <position position="148"/>
    </location>
    <ligand>
        <name>Mn(2+)</name>
        <dbReference type="ChEBI" id="CHEBI:29035"/>
    </ligand>
</feature>
<feature type="binding site" evidence="1">
    <location>
        <position position="172"/>
    </location>
    <ligand>
        <name>1-deoxy-D-xylulose 5-phosphate</name>
        <dbReference type="ChEBI" id="CHEBI:57792"/>
    </ligand>
</feature>
<feature type="binding site" evidence="1">
    <location>
        <position position="195"/>
    </location>
    <ligand>
        <name>1-deoxy-D-xylulose 5-phosphate</name>
        <dbReference type="ChEBI" id="CHEBI:57792"/>
    </ligand>
</feature>
<feature type="binding site" evidence="1">
    <location>
        <position position="201"/>
    </location>
    <ligand>
        <name>NADPH</name>
        <dbReference type="ChEBI" id="CHEBI:57783"/>
    </ligand>
</feature>
<feature type="binding site" evidence="1">
    <location>
        <position position="208"/>
    </location>
    <ligand>
        <name>1-deoxy-D-xylulose 5-phosphate</name>
        <dbReference type="ChEBI" id="CHEBI:57792"/>
    </ligand>
</feature>
<feature type="binding site" evidence="1">
    <location>
        <position position="213"/>
    </location>
    <ligand>
        <name>1-deoxy-D-xylulose 5-phosphate</name>
        <dbReference type="ChEBI" id="CHEBI:57792"/>
    </ligand>
</feature>
<feature type="binding site" evidence="1">
    <location>
        <position position="214"/>
    </location>
    <ligand>
        <name>1-deoxy-D-xylulose 5-phosphate</name>
        <dbReference type="ChEBI" id="CHEBI:57792"/>
    </ligand>
</feature>
<feature type="binding site" evidence="1">
    <location>
        <position position="217"/>
    </location>
    <ligand>
        <name>1-deoxy-D-xylulose 5-phosphate</name>
        <dbReference type="ChEBI" id="CHEBI:57792"/>
    </ligand>
</feature>
<feature type="binding site" evidence="1">
    <location>
        <position position="217"/>
    </location>
    <ligand>
        <name>Mn(2+)</name>
        <dbReference type="ChEBI" id="CHEBI:29035"/>
    </ligand>
</feature>
<dbReference type="EC" id="1.1.1.267" evidence="1"/>
<dbReference type="EMBL" id="CP000227">
    <property type="protein sequence ID" value="ACM14034.1"/>
    <property type="molecule type" value="Genomic_DNA"/>
</dbReference>
<dbReference type="SMR" id="B9IVB0"/>
<dbReference type="KEGG" id="bcq:BCQ_3606"/>
<dbReference type="HOGENOM" id="CLU_035714_4_0_9"/>
<dbReference type="UniPathway" id="UPA00056">
    <property type="reaction ID" value="UER00092"/>
</dbReference>
<dbReference type="Proteomes" id="UP000000441">
    <property type="component" value="Chromosome"/>
</dbReference>
<dbReference type="GO" id="GO:0030604">
    <property type="term" value="F:1-deoxy-D-xylulose-5-phosphate reductoisomerase activity"/>
    <property type="evidence" value="ECO:0007669"/>
    <property type="project" value="UniProtKB-UniRule"/>
</dbReference>
<dbReference type="GO" id="GO:0030145">
    <property type="term" value="F:manganese ion binding"/>
    <property type="evidence" value="ECO:0007669"/>
    <property type="project" value="TreeGrafter"/>
</dbReference>
<dbReference type="GO" id="GO:0070402">
    <property type="term" value="F:NADPH binding"/>
    <property type="evidence" value="ECO:0007669"/>
    <property type="project" value="InterPro"/>
</dbReference>
<dbReference type="GO" id="GO:0051484">
    <property type="term" value="P:isopentenyl diphosphate biosynthetic process, methylerythritol 4-phosphate pathway involved in terpenoid biosynthetic process"/>
    <property type="evidence" value="ECO:0007669"/>
    <property type="project" value="TreeGrafter"/>
</dbReference>
<dbReference type="FunFam" id="1.10.1740.10:FF:000005">
    <property type="entry name" value="1-deoxy-D-xylulose 5-phosphate reductoisomerase"/>
    <property type="match status" value="1"/>
</dbReference>
<dbReference type="FunFam" id="3.40.50.720:FF:000045">
    <property type="entry name" value="1-deoxy-D-xylulose 5-phosphate reductoisomerase"/>
    <property type="match status" value="1"/>
</dbReference>
<dbReference type="Gene3D" id="1.10.1740.10">
    <property type="match status" value="1"/>
</dbReference>
<dbReference type="Gene3D" id="3.40.50.720">
    <property type="entry name" value="NAD(P)-binding Rossmann-like Domain"/>
    <property type="match status" value="1"/>
</dbReference>
<dbReference type="HAMAP" id="MF_00183">
    <property type="entry name" value="DXP_reductoisom"/>
    <property type="match status" value="1"/>
</dbReference>
<dbReference type="InterPro" id="IPR003821">
    <property type="entry name" value="DXP_reductoisomerase"/>
</dbReference>
<dbReference type="InterPro" id="IPR013644">
    <property type="entry name" value="DXP_reductoisomerase_C"/>
</dbReference>
<dbReference type="InterPro" id="IPR013512">
    <property type="entry name" value="DXP_reductoisomerase_N"/>
</dbReference>
<dbReference type="InterPro" id="IPR026877">
    <property type="entry name" value="DXPR_C"/>
</dbReference>
<dbReference type="InterPro" id="IPR036169">
    <property type="entry name" value="DXPR_C_sf"/>
</dbReference>
<dbReference type="InterPro" id="IPR036291">
    <property type="entry name" value="NAD(P)-bd_dom_sf"/>
</dbReference>
<dbReference type="NCBIfam" id="TIGR00243">
    <property type="entry name" value="Dxr"/>
    <property type="match status" value="1"/>
</dbReference>
<dbReference type="NCBIfam" id="NF009114">
    <property type="entry name" value="PRK12464.1"/>
    <property type="match status" value="1"/>
</dbReference>
<dbReference type="PANTHER" id="PTHR30525">
    <property type="entry name" value="1-DEOXY-D-XYLULOSE 5-PHOSPHATE REDUCTOISOMERASE"/>
    <property type="match status" value="1"/>
</dbReference>
<dbReference type="PANTHER" id="PTHR30525:SF0">
    <property type="entry name" value="1-DEOXY-D-XYLULOSE 5-PHOSPHATE REDUCTOISOMERASE, CHLOROPLASTIC"/>
    <property type="match status" value="1"/>
</dbReference>
<dbReference type="Pfam" id="PF08436">
    <property type="entry name" value="DXP_redisom_C"/>
    <property type="match status" value="1"/>
</dbReference>
<dbReference type="Pfam" id="PF02670">
    <property type="entry name" value="DXP_reductoisom"/>
    <property type="match status" value="1"/>
</dbReference>
<dbReference type="Pfam" id="PF13288">
    <property type="entry name" value="DXPR_C"/>
    <property type="match status" value="1"/>
</dbReference>
<dbReference type="PIRSF" id="PIRSF006205">
    <property type="entry name" value="Dxp_reductismrs"/>
    <property type="match status" value="1"/>
</dbReference>
<dbReference type="SUPFAM" id="SSF69055">
    <property type="entry name" value="1-deoxy-D-xylulose-5-phosphate reductoisomerase, C-terminal domain"/>
    <property type="match status" value="1"/>
</dbReference>
<dbReference type="SUPFAM" id="SSF55347">
    <property type="entry name" value="Glyceraldehyde-3-phosphate dehydrogenase-like, C-terminal domain"/>
    <property type="match status" value="1"/>
</dbReference>
<dbReference type="SUPFAM" id="SSF51735">
    <property type="entry name" value="NAD(P)-binding Rossmann-fold domains"/>
    <property type="match status" value="1"/>
</dbReference>
<name>DXR_BACCQ</name>
<proteinExistence type="inferred from homology"/>
<sequence length="380" mass="42245">MKNISLLGASGSIGTQTLDVLRSHPDQFRLVAFSAGKNIDYAVKVIQEFSPQIVSVQREEDVLKLQAVSGNTKVVYGSEGLLEVALHPDAEIVVNAVVGSVGLLPTLRAIEAKKTIGIANKETLVTAGHLVMEAARKHNVSLLPVDSEHSAIFQCLNGENEKRISRLIITASGGSFRDKTRDELHHVTVEDALRHPNWSMGSKITIDSATMMNKGLEVIEAHWLFGIPYEQIDVVLHKESIIHSMVEFEDRSVMAQLGSPDMRVPIQYALTYPDRLPLSDTKQLNLWEMGTLHFEKMNQERFRCLRFAYEAGKTGGSMPAVMNAANEVAVEAFLQKRIGFLTVEDLIEKAMNHHNVIARPSLEEILEIDAATRRFVMEQI</sequence>
<organism>
    <name type="scientific">Bacillus cereus (strain Q1)</name>
    <dbReference type="NCBI Taxonomy" id="361100"/>
    <lineage>
        <taxon>Bacteria</taxon>
        <taxon>Bacillati</taxon>
        <taxon>Bacillota</taxon>
        <taxon>Bacilli</taxon>
        <taxon>Bacillales</taxon>
        <taxon>Bacillaceae</taxon>
        <taxon>Bacillus</taxon>
        <taxon>Bacillus cereus group</taxon>
    </lineage>
</organism>